<organism>
    <name type="scientific">Gallus gallus</name>
    <name type="common">Chicken</name>
    <dbReference type="NCBI Taxonomy" id="9031"/>
    <lineage>
        <taxon>Eukaryota</taxon>
        <taxon>Metazoa</taxon>
        <taxon>Chordata</taxon>
        <taxon>Craniata</taxon>
        <taxon>Vertebrata</taxon>
        <taxon>Euteleostomi</taxon>
        <taxon>Archelosauria</taxon>
        <taxon>Archosauria</taxon>
        <taxon>Dinosauria</taxon>
        <taxon>Saurischia</taxon>
        <taxon>Theropoda</taxon>
        <taxon>Coelurosauria</taxon>
        <taxon>Aves</taxon>
        <taxon>Neognathae</taxon>
        <taxon>Galloanserae</taxon>
        <taxon>Galliformes</taxon>
        <taxon>Phasianidae</taxon>
        <taxon>Phasianinae</taxon>
        <taxon>Gallus</taxon>
    </lineage>
</organism>
<accession>Q9IAL2</accession>
<reference key="1">
    <citation type="journal article" date="2000" name="Mech. Dev.">
        <title>Expression of Chx10 and Chx10-1 in the developing chicken retina.</title>
        <authorList>
            <person name="Chen C.-M.A."/>
            <person name="Cepko C.L."/>
        </authorList>
    </citation>
    <scope>NUCLEOTIDE SEQUENCE [MRNA]</scope>
</reference>
<name>VSX1_CHICK</name>
<protein>
    <recommendedName>
        <fullName>Visual system homeobox 1</fullName>
    </recommendedName>
    <alternativeName>
        <fullName>Homeobox protein Chx10-1</fullName>
    </alternativeName>
    <alternativeName>
        <fullName>Transcription factor VSX1</fullName>
    </alternativeName>
</protein>
<keyword id="KW-0217">Developmental protein</keyword>
<keyword id="KW-0238">DNA-binding</keyword>
<keyword id="KW-0371">Homeobox</keyword>
<keyword id="KW-0539">Nucleus</keyword>
<keyword id="KW-1185">Reference proteome</keyword>
<keyword id="KW-0716">Sensory transduction</keyword>
<keyword id="KW-0804">Transcription</keyword>
<keyword id="KW-0805">Transcription regulation</keyword>
<keyword id="KW-0844">Vision</keyword>
<sequence>MPGRADPSGGRAAVPVPLPVAVAAAPSPASVRSALPERSARPGGAGLRAKGFAITDLLGLEAELQPPPGAAPGPAGGYEGGGALGLGLGLLCGLAGPGAPCLLPAPLPLLPARGPRPGPPGPPPAARRHKESASDEDSLSGDASELKMPASQIKRKKRRHRTVFTAHQLEELEKAFNEAHYPDVYAREMLAVKTELPEDRIQVWFQNRRAKWRKREKCWGRSSVMAEYGLYGAMVRHSIPLPESIINSAKSGLVGSCAPWLLGMHKKSMEVSRKAESQEKPADGWQAEQDGEELQGKQASSQRSSEKLGPAKDPEDTAIDLSRTAKQEKRSVLRQCVNGDPTTEQKDRDH</sequence>
<dbReference type="EMBL" id="AF178670">
    <property type="protein sequence ID" value="AAF40312.1"/>
    <property type="molecule type" value="mRNA"/>
</dbReference>
<dbReference type="RefSeq" id="NP_990100.1">
    <property type="nucleotide sequence ID" value="NM_204769.1"/>
</dbReference>
<dbReference type="SMR" id="Q9IAL2"/>
<dbReference type="FunCoup" id="Q9IAL2">
    <property type="interactions" value="122"/>
</dbReference>
<dbReference type="STRING" id="9031.ENSGALP00000055813"/>
<dbReference type="PaxDb" id="9031-ENSGALP00000043363"/>
<dbReference type="GeneID" id="395537"/>
<dbReference type="KEGG" id="gga:395537"/>
<dbReference type="CTD" id="30813"/>
<dbReference type="VEuPathDB" id="HostDB:geneid_395537"/>
<dbReference type="eggNOG" id="KOG0494">
    <property type="taxonomic scope" value="Eukaryota"/>
</dbReference>
<dbReference type="InParanoid" id="Q9IAL2"/>
<dbReference type="OrthoDB" id="6159439at2759"/>
<dbReference type="PhylomeDB" id="Q9IAL2"/>
<dbReference type="PRO" id="PR:Q9IAL2"/>
<dbReference type="Proteomes" id="UP000000539">
    <property type="component" value="Unassembled WGS sequence"/>
</dbReference>
<dbReference type="GO" id="GO:0005634">
    <property type="term" value="C:nucleus"/>
    <property type="evidence" value="ECO:0000318"/>
    <property type="project" value="GO_Central"/>
</dbReference>
<dbReference type="GO" id="GO:0000981">
    <property type="term" value="F:DNA-binding transcription factor activity, RNA polymerase II-specific"/>
    <property type="evidence" value="ECO:0007669"/>
    <property type="project" value="InterPro"/>
</dbReference>
<dbReference type="GO" id="GO:0000976">
    <property type="term" value="F:transcription cis-regulatory region binding"/>
    <property type="evidence" value="ECO:0000318"/>
    <property type="project" value="GO_Central"/>
</dbReference>
<dbReference type="GO" id="GO:0048666">
    <property type="term" value="P:neuron development"/>
    <property type="evidence" value="ECO:0000318"/>
    <property type="project" value="GO_Central"/>
</dbReference>
<dbReference type="GO" id="GO:0006355">
    <property type="term" value="P:regulation of DNA-templated transcription"/>
    <property type="evidence" value="ECO:0000318"/>
    <property type="project" value="GO_Central"/>
</dbReference>
<dbReference type="GO" id="GO:0007601">
    <property type="term" value="P:visual perception"/>
    <property type="evidence" value="ECO:0007669"/>
    <property type="project" value="UniProtKB-KW"/>
</dbReference>
<dbReference type="CDD" id="cd00086">
    <property type="entry name" value="homeodomain"/>
    <property type="match status" value="1"/>
</dbReference>
<dbReference type="FunFam" id="1.10.10.60:FF:000065">
    <property type="entry name" value="Visual system homeobox 1"/>
    <property type="match status" value="1"/>
</dbReference>
<dbReference type="Gene3D" id="1.10.10.60">
    <property type="entry name" value="Homeodomain-like"/>
    <property type="match status" value="1"/>
</dbReference>
<dbReference type="InterPro" id="IPR023339">
    <property type="entry name" value="CVC"/>
</dbReference>
<dbReference type="InterPro" id="IPR001356">
    <property type="entry name" value="HD"/>
</dbReference>
<dbReference type="InterPro" id="IPR017970">
    <property type="entry name" value="Homeobox_CS"/>
</dbReference>
<dbReference type="InterPro" id="IPR051775">
    <property type="entry name" value="Homeobox_domain"/>
</dbReference>
<dbReference type="InterPro" id="IPR009057">
    <property type="entry name" value="Homeodomain-like_sf"/>
</dbReference>
<dbReference type="PANTHER" id="PTHR24323">
    <property type="entry name" value="CEH-10 HOMEODOMAIN-CONTAINING HOMOLOG"/>
    <property type="match status" value="1"/>
</dbReference>
<dbReference type="PANTHER" id="PTHR24323:SF3">
    <property type="entry name" value="VISUAL SYSTEM HOMEOBOX 1"/>
    <property type="match status" value="1"/>
</dbReference>
<dbReference type="Pfam" id="PF00046">
    <property type="entry name" value="Homeodomain"/>
    <property type="match status" value="1"/>
</dbReference>
<dbReference type="SMART" id="SM00389">
    <property type="entry name" value="HOX"/>
    <property type="match status" value="1"/>
</dbReference>
<dbReference type="SUPFAM" id="SSF46689">
    <property type="entry name" value="Homeodomain-like"/>
    <property type="match status" value="1"/>
</dbReference>
<dbReference type="PROSITE" id="PS51496">
    <property type="entry name" value="CVC"/>
    <property type="match status" value="1"/>
</dbReference>
<dbReference type="PROSITE" id="PS00027">
    <property type="entry name" value="HOMEOBOX_1"/>
    <property type="match status" value="1"/>
</dbReference>
<dbReference type="PROSITE" id="PS50071">
    <property type="entry name" value="HOMEOBOX_2"/>
    <property type="match status" value="1"/>
</dbReference>
<gene>
    <name type="primary">VSX1</name>
    <name type="synonym">CHX10-1</name>
</gene>
<proteinExistence type="evidence at transcript level"/>
<comment type="function">
    <text evidence="1">Binds to the 37-bp core of the locus control region (LCR) of the red/green visual pigment gene cluster. May regulate the activity of the LCR and the cone opsin genes at earlier stages of development (By similarity). Dispensable in early retinal development (By similarity).</text>
</comment>
<comment type="subcellular location">
    <subcellularLocation>
        <location evidence="1">Nucleus</location>
    </subcellularLocation>
</comment>
<comment type="tissue specificity">
    <text>Restricted to bipolar cells of the retina and spinal cord.</text>
</comment>
<comment type="developmental stage">
    <text>At stage 12, expressed throughout the invaginating optic vesicles and a subset of cells in the ventral spinal cord, presumably interneuron precursors. At stage 14, when the optic cup forms, expression is restricted to a subset of retinoblasts. At stage 15, expression along the ventral spinal and hindbrain intensifies and persists beyond stage 20.</text>
</comment>
<comment type="similarity">
    <text evidence="5">Belongs to the paired homeobox family.</text>
</comment>
<feature type="chain" id="PRO_0000049357" description="Visual system homeobox 1">
    <location>
        <begin position="1"/>
        <end position="350"/>
    </location>
</feature>
<feature type="domain" description="CVC" evidence="3">
    <location>
        <begin position="217"/>
        <end position="270"/>
    </location>
</feature>
<feature type="DNA-binding region" description="Homeobox" evidence="2">
    <location>
        <begin position="157"/>
        <end position="216"/>
    </location>
</feature>
<feature type="region of interest" description="Disordered" evidence="4">
    <location>
        <begin position="27"/>
        <end position="47"/>
    </location>
</feature>
<feature type="region of interest" description="Disordered" evidence="4">
    <location>
        <begin position="112"/>
        <end position="159"/>
    </location>
</feature>
<feature type="region of interest" description="Disordered" evidence="4">
    <location>
        <begin position="271"/>
        <end position="350"/>
    </location>
</feature>
<feature type="short sequence motif" description="Octapeptide motif">
    <location>
        <begin position="52"/>
        <end position="59"/>
    </location>
</feature>
<feature type="compositionally biased region" description="Low complexity" evidence="4">
    <location>
        <begin position="27"/>
        <end position="36"/>
    </location>
</feature>
<feature type="compositionally biased region" description="Pro residues" evidence="4">
    <location>
        <begin position="112"/>
        <end position="125"/>
    </location>
</feature>
<feature type="compositionally biased region" description="Basic and acidic residues" evidence="4">
    <location>
        <begin position="271"/>
        <end position="282"/>
    </location>
</feature>
<feature type="compositionally biased region" description="Basic and acidic residues" evidence="4">
    <location>
        <begin position="304"/>
        <end position="315"/>
    </location>
</feature>
<evidence type="ECO:0000250" key="1">
    <source>
        <dbReference type="UniProtKB" id="Q91V10"/>
    </source>
</evidence>
<evidence type="ECO:0000255" key="2">
    <source>
        <dbReference type="PROSITE-ProRule" id="PRU00108"/>
    </source>
</evidence>
<evidence type="ECO:0000255" key="3">
    <source>
        <dbReference type="PROSITE-ProRule" id="PRU00829"/>
    </source>
</evidence>
<evidence type="ECO:0000256" key="4">
    <source>
        <dbReference type="SAM" id="MobiDB-lite"/>
    </source>
</evidence>
<evidence type="ECO:0000305" key="5"/>